<protein>
    <recommendedName>
        <fullName evidence="1">ATP-dependent Clp protease proteolytic subunit 1</fullName>
        <ecNumber evidence="1">3.4.21.92</ecNumber>
    </recommendedName>
    <alternativeName>
        <fullName evidence="1">Endopeptidase Clp 1</fullName>
    </alternativeName>
</protein>
<comment type="function">
    <text evidence="1">Cleaves peptides in various proteins in a process that requires ATP hydrolysis. Has a chymotrypsin-like activity. Plays a major role in the degradation of misfolded proteins.</text>
</comment>
<comment type="catalytic activity">
    <reaction evidence="1">
        <text>Hydrolysis of proteins to small peptides in the presence of ATP and magnesium. alpha-casein is the usual test substrate. In the absence of ATP, only oligopeptides shorter than five residues are hydrolyzed (such as succinyl-Leu-Tyr-|-NHMec, and Leu-Tyr-Leu-|-Tyr-Trp, in which cleavage of the -Tyr-|-Leu- and -Tyr-|-Trp bonds also occurs).</text>
        <dbReference type="EC" id="3.4.21.92"/>
    </reaction>
</comment>
<comment type="subunit">
    <text evidence="1">Fourteen ClpP subunits assemble into 2 heptameric rings which stack back to back to give a disk-like structure with a central cavity, resembling the structure of eukaryotic proteasomes.</text>
</comment>
<comment type="subcellular location">
    <subcellularLocation>
        <location evidence="1">Cytoplasm</location>
    </subcellularLocation>
</comment>
<comment type="similarity">
    <text evidence="1">Belongs to the peptidase S14 family.</text>
</comment>
<reference key="1">
    <citation type="journal article" date="2006" name="J. Bacteriol.">
        <title>Pathogenomic sequence analysis of Bacillus cereus and Bacillus thuringiensis isolates closely related to Bacillus anthracis.</title>
        <authorList>
            <person name="Han C.S."/>
            <person name="Xie G."/>
            <person name="Challacombe J.F."/>
            <person name="Altherr M.R."/>
            <person name="Bhotika S.S."/>
            <person name="Bruce D."/>
            <person name="Campbell C.S."/>
            <person name="Campbell M.L."/>
            <person name="Chen J."/>
            <person name="Chertkov O."/>
            <person name="Cleland C."/>
            <person name="Dimitrijevic M."/>
            <person name="Doggett N.A."/>
            <person name="Fawcett J.J."/>
            <person name="Glavina T."/>
            <person name="Goodwin L.A."/>
            <person name="Hill K.K."/>
            <person name="Hitchcock P."/>
            <person name="Jackson P.J."/>
            <person name="Keim P."/>
            <person name="Kewalramani A.R."/>
            <person name="Longmire J."/>
            <person name="Lucas S."/>
            <person name="Malfatti S."/>
            <person name="McMurry K."/>
            <person name="Meincke L.J."/>
            <person name="Misra M."/>
            <person name="Moseman B.L."/>
            <person name="Mundt M."/>
            <person name="Munk A.C."/>
            <person name="Okinaka R.T."/>
            <person name="Parson-Quintana B."/>
            <person name="Reilly L.P."/>
            <person name="Richardson P."/>
            <person name="Robinson D.L."/>
            <person name="Rubin E."/>
            <person name="Saunders E."/>
            <person name="Tapia R."/>
            <person name="Tesmer J.G."/>
            <person name="Thayer N."/>
            <person name="Thompson L.S."/>
            <person name="Tice H."/>
            <person name="Ticknor L.O."/>
            <person name="Wills P.L."/>
            <person name="Brettin T.S."/>
            <person name="Gilna P."/>
        </authorList>
    </citation>
    <scope>NUCLEOTIDE SEQUENCE [LARGE SCALE GENOMIC DNA]</scope>
    <source>
        <strain>ZK / E33L</strain>
    </source>
</reference>
<name>CLPP1_BACCZ</name>
<gene>
    <name evidence="1" type="primary">clpP1</name>
    <name type="ordered locus">BCE33L2518</name>
</gene>
<organism>
    <name type="scientific">Bacillus cereus (strain ZK / E33L)</name>
    <dbReference type="NCBI Taxonomy" id="288681"/>
    <lineage>
        <taxon>Bacteria</taxon>
        <taxon>Bacillati</taxon>
        <taxon>Bacillota</taxon>
        <taxon>Bacilli</taxon>
        <taxon>Bacillales</taxon>
        <taxon>Bacillaceae</taxon>
        <taxon>Bacillus</taxon>
        <taxon>Bacillus cereus group</taxon>
    </lineage>
</organism>
<proteinExistence type="inferred from homology"/>
<keyword id="KW-0963">Cytoplasm</keyword>
<keyword id="KW-0378">Hydrolase</keyword>
<keyword id="KW-0645">Protease</keyword>
<keyword id="KW-0720">Serine protease</keyword>
<evidence type="ECO:0000255" key="1">
    <source>
        <dbReference type="HAMAP-Rule" id="MF_00444"/>
    </source>
</evidence>
<dbReference type="EC" id="3.4.21.92" evidence="1"/>
<dbReference type="EMBL" id="CP000001">
    <property type="protein sequence ID" value="AAU17741.1"/>
    <property type="molecule type" value="Genomic_DNA"/>
</dbReference>
<dbReference type="SMR" id="Q63AG0"/>
<dbReference type="MEROPS" id="S14.001"/>
<dbReference type="KEGG" id="bcz:BCE33L2518"/>
<dbReference type="PATRIC" id="fig|288681.22.peg.2954"/>
<dbReference type="Proteomes" id="UP000002612">
    <property type="component" value="Chromosome"/>
</dbReference>
<dbReference type="GO" id="GO:0005737">
    <property type="term" value="C:cytoplasm"/>
    <property type="evidence" value="ECO:0007669"/>
    <property type="project" value="UniProtKB-SubCell"/>
</dbReference>
<dbReference type="GO" id="GO:0009368">
    <property type="term" value="C:endopeptidase Clp complex"/>
    <property type="evidence" value="ECO:0007669"/>
    <property type="project" value="TreeGrafter"/>
</dbReference>
<dbReference type="GO" id="GO:0004176">
    <property type="term" value="F:ATP-dependent peptidase activity"/>
    <property type="evidence" value="ECO:0007669"/>
    <property type="project" value="InterPro"/>
</dbReference>
<dbReference type="GO" id="GO:0051117">
    <property type="term" value="F:ATPase binding"/>
    <property type="evidence" value="ECO:0007669"/>
    <property type="project" value="TreeGrafter"/>
</dbReference>
<dbReference type="GO" id="GO:0004252">
    <property type="term" value="F:serine-type endopeptidase activity"/>
    <property type="evidence" value="ECO:0007669"/>
    <property type="project" value="UniProtKB-UniRule"/>
</dbReference>
<dbReference type="GO" id="GO:0006515">
    <property type="term" value="P:protein quality control for misfolded or incompletely synthesized proteins"/>
    <property type="evidence" value="ECO:0007669"/>
    <property type="project" value="TreeGrafter"/>
</dbReference>
<dbReference type="CDD" id="cd07017">
    <property type="entry name" value="S14_ClpP_2"/>
    <property type="match status" value="1"/>
</dbReference>
<dbReference type="FunFam" id="3.90.226.10:FF:000001">
    <property type="entry name" value="ATP-dependent Clp protease proteolytic subunit"/>
    <property type="match status" value="1"/>
</dbReference>
<dbReference type="Gene3D" id="3.90.226.10">
    <property type="entry name" value="2-enoyl-CoA Hydratase, Chain A, domain 1"/>
    <property type="match status" value="1"/>
</dbReference>
<dbReference type="HAMAP" id="MF_00444">
    <property type="entry name" value="ClpP"/>
    <property type="match status" value="1"/>
</dbReference>
<dbReference type="InterPro" id="IPR001907">
    <property type="entry name" value="ClpP"/>
</dbReference>
<dbReference type="InterPro" id="IPR029045">
    <property type="entry name" value="ClpP/crotonase-like_dom_sf"/>
</dbReference>
<dbReference type="InterPro" id="IPR023562">
    <property type="entry name" value="ClpP/TepA"/>
</dbReference>
<dbReference type="InterPro" id="IPR033135">
    <property type="entry name" value="ClpP_His_AS"/>
</dbReference>
<dbReference type="NCBIfam" id="TIGR00493">
    <property type="entry name" value="clpP"/>
    <property type="match status" value="1"/>
</dbReference>
<dbReference type="NCBIfam" id="NF001368">
    <property type="entry name" value="PRK00277.1"/>
    <property type="match status" value="1"/>
</dbReference>
<dbReference type="NCBIfam" id="NF009205">
    <property type="entry name" value="PRK12553.1"/>
    <property type="match status" value="1"/>
</dbReference>
<dbReference type="PANTHER" id="PTHR10381">
    <property type="entry name" value="ATP-DEPENDENT CLP PROTEASE PROTEOLYTIC SUBUNIT"/>
    <property type="match status" value="1"/>
</dbReference>
<dbReference type="PANTHER" id="PTHR10381:SF70">
    <property type="entry name" value="ATP-DEPENDENT CLP PROTEASE PROTEOLYTIC SUBUNIT"/>
    <property type="match status" value="1"/>
</dbReference>
<dbReference type="Pfam" id="PF00574">
    <property type="entry name" value="CLP_protease"/>
    <property type="match status" value="1"/>
</dbReference>
<dbReference type="PRINTS" id="PR00127">
    <property type="entry name" value="CLPPROTEASEP"/>
</dbReference>
<dbReference type="SUPFAM" id="SSF52096">
    <property type="entry name" value="ClpP/crotonase"/>
    <property type="match status" value="1"/>
</dbReference>
<dbReference type="PROSITE" id="PS00382">
    <property type="entry name" value="CLP_PROTEASE_HIS"/>
    <property type="match status" value="1"/>
</dbReference>
<feature type="chain" id="PRO_0000179490" description="ATP-dependent Clp protease proteolytic subunit 1">
    <location>
        <begin position="1"/>
        <end position="193"/>
    </location>
</feature>
<feature type="active site" description="Nucleophile" evidence="1">
    <location>
        <position position="98"/>
    </location>
</feature>
<feature type="active site" evidence="1">
    <location>
        <position position="123"/>
    </location>
</feature>
<accession>Q63AG0</accession>
<sequence length="193" mass="21192">MNAIPYVVEQTKLGERSYDIYSRLLKDRIIIIGSEINDQVASSVVAQLLFLEAEDAEKDIFLYINSPGGSTTAGFAILDTMNLIKPDVQTLCMGFAASFGALLLLSGAKGKRFALPNSEIMIHQPLGGAKGQATEIEITAKRILKLKHDINKMIAEKTGQPIERVAHDTERDYFMTAEEAKAYGIVDDVVTKK</sequence>